<accession>Q09421</accession>
<reference key="1">
    <citation type="journal article" date="1998" name="Science">
        <title>Genome sequence of the nematode C. elegans: a platform for investigating biology.</title>
        <authorList>
            <consortium name="The C. elegans sequencing consortium"/>
        </authorList>
    </citation>
    <scope>NUCLEOTIDE SEQUENCE [LARGE SCALE GENOMIC DNA]</scope>
    <source>
        <strain>Bristol N2</strain>
    </source>
</reference>
<protein>
    <recommendedName>
        <fullName>Uncharacterized protein R07B1.7</fullName>
    </recommendedName>
</protein>
<organism>
    <name type="scientific">Caenorhabditis elegans</name>
    <dbReference type="NCBI Taxonomy" id="6239"/>
    <lineage>
        <taxon>Eukaryota</taxon>
        <taxon>Metazoa</taxon>
        <taxon>Ecdysozoa</taxon>
        <taxon>Nematoda</taxon>
        <taxon>Chromadorea</taxon>
        <taxon>Rhabditida</taxon>
        <taxon>Rhabditina</taxon>
        <taxon>Rhabditomorpha</taxon>
        <taxon>Rhabditoidea</taxon>
        <taxon>Rhabditidae</taxon>
        <taxon>Peloderinae</taxon>
        <taxon>Caenorhabditis</taxon>
    </lineage>
</organism>
<sequence length="142" mass="15228">MFRNLTEQIDNSVCVYCLKSDIPTSTTDIPTSTTPMTTSAPTTTMPRTVCQSCTLDATTVIMVHPSAKPFTSDTIDDTQTCAIRTLVCDARSPGGDVLVSFNRDDSGSTGGPNTFTTILNCNDDMQWTLSGIVITEIECQSA</sequence>
<keyword id="KW-1185">Reference proteome</keyword>
<feature type="chain" id="PRO_0000065421" description="Uncharacterized protein R07B1.7">
    <location>
        <begin position="1"/>
        <end position="142"/>
    </location>
</feature>
<gene>
    <name type="ORF">R07B1.7</name>
</gene>
<dbReference type="EMBL" id="Z48621">
    <property type="protein sequence ID" value="CAA88544.2"/>
    <property type="molecule type" value="Genomic_DNA"/>
</dbReference>
<dbReference type="PIR" id="T23997">
    <property type="entry name" value="T23997"/>
</dbReference>
<dbReference type="RefSeq" id="NP_509655.2">
    <property type="nucleotide sequence ID" value="NM_077254.2"/>
</dbReference>
<dbReference type="FunCoup" id="Q09421">
    <property type="interactions" value="80"/>
</dbReference>
<dbReference type="PaxDb" id="6239-R07B1.7"/>
<dbReference type="EnsemblMetazoa" id="R07B1.7.1">
    <property type="protein sequence ID" value="R07B1.7.1"/>
    <property type="gene ID" value="WBGene00011079"/>
</dbReference>
<dbReference type="GeneID" id="187648"/>
<dbReference type="KEGG" id="cel:CELE_R07B1.7"/>
<dbReference type="UCSC" id="R07B1.7">
    <property type="organism name" value="c. elegans"/>
</dbReference>
<dbReference type="AGR" id="WB:WBGene00011079"/>
<dbReference type="CTD" id="187648"/>
<dbReference type="WormBase" id="R07B1.7">
    <property type="protein sequence ID" value="CE52883"/>
    <property type="gene ID" value="WBGene00011079"/>
</dbReference>
<dbReference type="GeneTree" id="ENSGT00970000196699"/>
<dbReference type="HOGENOM" id="CLU_1877299_0_0_1"/>
<dbReference type="InParanoid" id="Q09421"/>
<dbReference type="OrthoDB" id="5858020at2759"/>
<dbReference type="PRO" id="PR:Q09421"/>
<dbReference type="Proteomes" id="UP000001940">
    <property type="component" value="Chromosome X"/>
</dbReference>
<dbReference type="Bgee" id="WBGene00011079">
    <property type="expression patterns" value="Expressed in larva"/>
</dbReference>
<dbReference type="InterPro" id="IPR002601">
    <property type="entry name" value="C6_domain"/>
</dbReference>
<dbReference type="PANTHER" id="PTHR21629">
    <property type="entry name" value="C6 DOMAIN-CONTAINING PROTEIN"/>
    <property type="match status" value="1"/>
</dbReference>
<dbReference type="PANTHER" id="PTHR21629:SF5">
    <property type="entry name" value="C6 DOMAIN-CONTAINING PROTEIN"/>
    <property type="match status" value="1"/>
</dbReference>
<dbReference type="Pfam" id="PF01681">
    <property type="entry name" value="C6"/>
    <property type="match status" value="1"/>
</dbReference>
<dbReference type="SMART" id="SM01048">
    <property type="entry name" value="C6"/>
    <property type="match status" value="1"/>
</dbReference>
<name>YRN7_CAEEL</name>
<proteinExistence type="predicted"/>